<organism>
    <name type="scientific">Streptococcus mutans serotype c (strain ATCC 700610 / UA159)</name>
    <dbReference type="NCBI Taxonomy" id="210007"/>
    <lineage>
        <taxon>Bacteria</taxon>
        <taxon>Bacillati</taxon>
        <taxon>Bacillota</taxon>
        <taxon>Bacilli</taxon>
        <taxon>Lactobacillales</taxon>
        <taxon>Streptococcaceae</taxon>
        <taxon>Streptococcus</taxon>
    </lineage>
</organism>
<name>SYD_STRMU</name>
<gene>
    <name evidence="1" type="primary">aspS2</name>
    <name type="ordered locus">SMU_2101</name>
</gene>
<dbReference type="EC" id="6.1.1.12" evidence="1"/>
<dbReference type="EMBL" id="AE014133">
    <property type="protein sequence ID" value="AAN59695.1"/>
    <property type="molecule type" value="Genomic_DNA"/>
</dbReference>
<dbReference type="RefSeq" id="NP_722389.1">
    <property type="nucleotide sequence ID" value="NC_004350.2"/>
</dbReference>
<dbReference type="SMR" id="Q8DRV9"/>
<dbReference type="STRING" id="210007.SMU_2101"/>
<dbReference type="KEGG" id="smu:SMU_2101"/>
<dbReference type="PATRIC" id="fig|210007.7.peg.1871"/>
<dbReference type="eggNOG" id="COG0173">
    <property type="taxonomic scope" value="Bacteria"/>
</dbReference>
<dbReference type="HOGENOM" id="CLU_014330_3_2_9"/>
<dbReference type="OrthoDB" id="9802326at2"/>
<dbReference type="PhylomeDB" id="Q8DRV9"/>
<dbReference type="Proteomes" id="UP000002512">
    <property type="component" value="Chromosome"/>
</dbReference>
<dbReference type="GO" id="GO:0005737">
    <property type="term" value="C:cytoplasm"/>
    <property type="evidence" value="ECO:0007669"/>
    <property type="project" value="UniProtKB-SubCell"/>
</dbReference>
<dbReference type="GO" id="GO:0004815">
    <property type="term" value="F:aspartate-tRNA ligase activity"/>
    <property type="evidence" value="ECO:0007669"/>
    <property type="project" value="UniProtKB-UniRule"/>
</dbReference>
<dbReference type="GO" id="GO:0005524">
    <property type="term" value="F:ATP binding"/>
    <property type="evidence" value="ECO:0007669"/>
    <property type="project" value="UniProtKB-UniRule"/>
</dbReference>
<dbReference type="GO" id="GO:0140096">
    <property type="term" value="F:catalytic activity, acting on a protein"/>
    <property type="evidence" value="ECO:0007669"/>
    <property type="project" value="UniProtKB-ARBA"/>
</dbReference>
<dbReference type="GO" id="GO:0003676">
    <property type="term" value="F:nucleic acid binding"/>
    <property type="evidence" value="ECO:0007669"/>
    <property type="project" value="InterPro"/>
</dbReference>
<dbReference type="GO" id="GO:0016740">
    <property type="term" value="F:transferase activity"/>
    <property type="evidence" value="ECO:0007669"/>
    <property type="project" value="UniProtKB-ARBA"/>
</dbReference>
<dbReference type="GO" id="GO:0006422">
    <property type="term" value="P:aspartyl-tRNA aminoacylation"/>
    <property type="evidence" value="ECO:0007669"/>
    <property type="project" value="UniProtKB-UniRule"/>
</dbReference>
<dbReference type="CDD" id="cd00777">
    <property type="entry name" value="AspRS_core"/>
    <property type="match status" value="1"/>
</dbReference>
<dbReference type="CDD" id="cd04317">
    <property type="entry name" value="EcAspRS_like_N"/>
    <property type="match status" value="1"/>
</dbReference>
<dbReference type="Gene3D" id="3.30.930.10">
    <property type="entry name" value="Bira Bifunctional Protein, Domain 2"/>
    <property type="match status" value="1"/>
</dbReference>
<dbReference type="Gene3D" id="3.30.1360.30">
    <property type="entry name" value="GAD-like domain"/>
    <property type="match status" value="1"/>
</dbReference>
<dbReference type="Gene3D" id="2.40.50.140">
    <property type="entry name" value="Nucleic acid-binding proteins"/>
    <property type="match status" value="1"/>
</dbReference>
<dbReference type="HAMAP" id="MF_00044">
    <property type="entry name" value="Asp_tRNA_synth_type1"/>
    <property type="match status" value="1"/>
</dbReference>
<dbReference type="InterPro" id="IPR004364">
    <property type="entry name" value="Aa-tRNA-synt_II"/>
</dbReference>
<dbReference type="InterPro" id="IPR006195">
    <property type="entry name" value="aa-tRNA-synth_II"/>
</dbReference>
<dbReference type="InterPro" id="IPR045864">
    <property type="entry name" value="aa-tRNA-synth_II/BPL/LPL"/>
</dbReference>
<dbReference type="InterPro" id="IPR004524">
    <property type="entry name" value="Asp-tRNA-ligase_1"/>
</dbReference>
<dbReference type="InterPro" id="IPR047089">
    <property type="entry name" value="Asp-tRNA-ligase_1_N"/>
</dbReference>
<dbReference type="InterPro" id="IPR002312">
    <property type="entry name" value="Asp/Asn-tRNA-synth_IIb"/>
</dbReference>
<dbReference type="InterPro" id="IPR047090">
    <property type="entry name" value="AspRS_core"/>
</dbReference>
<dbReference type="InterPro" id="IPR004115">
    <property type="entry name" value="GAD-like_sf"/>
</dbReference>
<dbReference type="InterPro" id="IPR029351">
    <property type="entry name" value="GAD_dom"/>
</dbReference>
<dbReference type="InterPro" id="IPR012340">
    <property type="entry name" value="NA-bd_OB-fold"/>
</dbReference>
<dbReference type="InterPro" id="IPR004365">
    <property type="entry name" value="NA-bd_OB_tRNA"/>
</dbReference>
<dbReference type="NCBIfam" id="TIGR00459">
    <property type="entry name" value="aspS_bact"/>
    <property type="match status" value="1"/>
</dbReference>
<dbReference type="NCBIfam" id="NF001750">
    <property type="entry name" value="PRK00476.1"/>
    <property type="match status" value="1"/>
</dbReference>
<dbReference type="PANTHER" id="PTHR22594:SF5">
    <property type="entry name" value="ASPARTATE--TRNA LIGASE, MITOCHONDRIAL"/>
    <property type="match status" value="1"/>
</dbReference>
<dbReference type="PANTHER" id="PTHR22594">
    <property type="entry name" value="ASPARTYL/LYSYL-TRNA SYNTHETASE"/>
    <property type="match status" value="1"/>
</dbReference>
<dbReference type="Pfam" id="PF02938">
    <property type="entry name" value="GAD"/>
    <property type="match status" value="1"/>
</dbReference>
<dbReference type="Pfam" id="PF00152">
    <property type="entry name" value="tRNA-synt_2"/>
    <property type="match status" value="1"/>
</dbReference>
<dbReference type="Pfam" id="PF01336">
    <property type="entry name" value="tRNA_anti-codon"/>
    <property type="match status" value="1"/>
</dbReference>
<dbReference type="PRINTS" id="PR01042">
    <property type="entry name" value="TRNASYNTHASP"/>
</dbReference>
<dbReference type="SUPFAM" id="SSF55681">
    <property type="entry name" value="Class II aaRS and biotin synthetases"/>
    <property type="match status" value="1"/>
</dbReference>
<dbReference type="SUPFAM" id="SSF55261">
    <property type="entry name" value="GAD domain-like"/>
    <property type="match status" value="1"/>
</dbReference>
<dbReference type="SUPFAM" id="SSF50249">
    <property type="entry name" value="Nucleic acid-binding proteins"/>
    <property type="match status" value="1"/>
</dbReference>
<dbReference type="PROSITE" id="PS50862">
    <property type="entry name" value="AA_TRNA_LIGASE_II"/>
    <property type="match status" value="1"/>
</dbReference>
<reference key="1">
    <citation type="journal article" date="2002" name="Proc. Natl. Acad. Sci. U.S.A.">
        <title>Genome sequence of Streptococcus mutans UA159, a cariogenic dental pathogen.</title>
        <authorList>
            <person name="Ajdic D.J."/>
            <person name="McShan W.M."/>
            <person name="McLaughlin R.E."/>
            <person name="Savic G."/>
            <person name="Chang J."/>
            <person name="Carson M.B."/>
            <person name="Primeaux C."/>
            <person name="Tian R."/>
            <person name="Kenton S."/>
            <person name="Jia H.G."/>
            <person name="Lin S.P."/>
            <person name="Qian Y."/>
            <person name="Li S."/>
            <person name="Zhu H."/>
            <person name="Najar F.Z."/>
            <person name="Lai H."/>
            <person name="White J."/>
            <person name="Roe B.A."/>
            <person name="Ferretti J.J."/>
        </authorList>
    </citation>
    <scope>NUCLEOTIDE SEQUENCE [LARGE SCALE GENOMIC DNA]</scope>
    <source>
        <strain>ATCC 700610 / UA159</strain>
    </source>
</reference>
<proteinExistence type="inferred from homology"/>
<comment type="function">
    <text evidence="1">Catalyzes the attachment of L-aspartate to tRNA(Asp) in a two-step reaction: L-aspartate is first activated by ATP to form Asp-AMP and then transferred to the acceptor end of tRNA(Asp).</text>
</comment>
<comment type="catalytic activity">
    <reaction evidence="1">
        <text>tRNA(Asp) + L-aspartate + ATP = L-aspartyl-tRNA(Asp) + AMP + diphosphate</text>
        <dbReference type="Rhea" id="RHEA:19649"/>
        <dbReference type="Rhea" id="RHEA-COMP:9660"/>
        <dbReference type="Rhea" id="RHEA-COMP:9678"/>
        <dbReference type="ChEBI" id="CHEBI:29991"/>
        <dbReference type="ChEBI" id="CHEBI:30616"/>
        <dbReference type="ChEBI" id="CHEBI:33019"/>
        <dbReference type="ChEBI" id="CHEBI:78442"/>
        <dbReference type="ChEBI" id="CHEBI:78516"/>
        <dbReference type="ChEBI" id="CHEBI:456215"/>
        <dbReference type="EC" id="6.1.1.12"/>
    </reaction>
</comment>
<comment type="subunit">
    <text evidence="1">Homodimer.</text>
</comment>
<comment type="subcellular location">
    <subcellularLocation>
        <location evidence="1">Cytoplasm</location>
    </subcellularLocation>
</comment>
<comment type="similarity">
    <text evidence="1">Belongs to the class-II aminoacyl-tRNA synthetase family. Type 1 subfamily.</text>
</comment>
<sequence length="589" mass="66967">MKRSMYAGAVRSEHIGQELTLKGWVARRRDLGGLIFIDLRDREGIVQLVINPKTASNTVVKSAESLRSEYVIEVTGMIVERDQANDNLPTGCVEMQVTQLTILNASQTPPFEIKDKIEANDDTRLRYRYLDLRRPEMLKNFKLRAKVTHVIRNYLDDLDFIDVETPMLAKSTPEGARDYLVPSRMSRGHFYALPQSPQITKQLLMNAGFDRYYQIVKCFRDEDLRGDRQPEFTQVDLETSFLSEQEIQEITERLIACVMKEVKGIELQLPLPQISYDTAMNNYGSDKPDTRFEMTLQDLTDLVKNIDFKVFSQAPAVKAIVAKNAANSYSRKAIDKLTDIVKPFGAKGLAWVKYNDGKIGGPIAKFLTTIEDELIERLQLEANDLVFFVADDLEIANGSLGALRNHLAKELNLIDHSKFNFLWVVDWPMFEWSEEENRYTSAHHPFTLPQEDTVAELEGDLSKVRAVAYDIVLNGYELGGGSLRINQRETQERMFKALGFTKESAQKQFGFLLEAMDYGFPPHGGLALGLDRFVMLLAGKENIREVIAFPKNNKASDPMTQAPSLVSDKQLDELYLQVNKNAVKNNEQE</sequence>
<accession>Q8DRV9</accession>
<protein>
    <recommendedName>
        <fullName evidence="1">Aspartate--tRNA ligase 2</fullName>
        <ecNumber evidence="1">6.1.1.12</ecNumber>
    </recommendedName>
    <alternativeName>
        <fullName evidence="1">Aspartyl-tRNA synthetase 2</fullName>
        <shortName evidence="1">AspRS 2</shortName>
    </alternativeName>
</protein>
<feature type="chain" id="PRO_0000110954" description="Aspartate--tRNA ligase 2">
    <location>
        <begin position="1"/>
        <end position="589"/>
    </location>
</feature>
<feature type="region of interest" description="Aspartate" evidence="1">
    <location>
        <begin position="198"/>
        <end position="201"/>
    </location>
</feature>
<feature type="binding site" evidence="1">
    <location>
        <position position="174"/>
    </location>
    <ligand>
        <name>L-aspartate</name>
        <dbReference type="ChEBI" id="CHEBI:29991"/>
    </ligand>
</feature>
<feature type="binding site" evidence="1">
    <location>
        <begin position="220"/>
        <end position="222"/>
    </location>
    <ligand>
        <name>ATP</name>
        <dbReference type="ChEBI" id="CHEBI:30616"/>
    </ligand>
</feature>
<feature type="binding site" evidence="1">
    <location>
        <position position="220"/>
    </location>
    <ligand>
        <name>L-aspartate</name>
        <dbReference type="ChEBI" id="CHEBI:29991"/>
    </ligand>
</feature>
<feature type="binding site" evidence="1">
    <location>
        <position position="229"/>
    </location>
    <ligand>
        <name>ATP</name>
        <dbReference type="ChEBI" id="CHEBI:30616"/>
    </ligand>
</feature>
<feature type="binding site" evidence="1">
    <location>
        <position position="443"/>
    </location>
    <ligand>
        <name>L-aspartate</name>
        <dbReference type="ChEBI" id="CHEBI:29991"/>
    </ligand>
</feature>
<feature type="binding site" evidence="1">
    <location>
        <position position="477"/>
    </location>
    <ligand>
        <name>ATP</name>
        <dbReference type="ChEBI" id="CHEBI:30616"/>
    </ligand>
</feature>
<feature type="binding site" evidence="1">
    <location>
        <position position="484"/>
    </location>
    <ligand>
        <name>L-aspartate</name>
        <dbReference type="ChEBI" id="CHEBI:29991"/>
    </ligand>
</feature>
<feature type="binding site" evidence="1">
    <location>
        <begin position="529"/>
        <end position="532"/>
    </location>
    <ligand>
        <name>ATP</name>
        <dbReference type="ChEBI" id="CHEBI:30616"/>
    </ligand>
</feature>
<evidence type="ECO:0000255" key="1">
    <source>
        <dbReference type="HAMAP-Rule" id="MF_00044"/>
    </source>
</evidence>
<keyword id="KW-0030">Aminoacyl-tRNA synthetase</keyword>
<keyword id="KW-0067">ATP-binding</keyword>
<keyword id="KW-0963">Cytoplasm</keyword>
<keyword id="KW-0436">Ligase</keyword>
<keyword id="KW-0547">Nucleotide-binding</keyword>
<keyword id="KW-0648">Protein biosynthesis</keyword>
<keyword id="KW-1185">Reference proteome</keyword>